<organism>
    <name type="scientific">Pongo abelii</name>
    <name type="common">Sumatran orangutan</name>
    <name type="synonym">Pongo pygmaeus abelii</name>
    <dbReference type="NCBI Taxonomy" id="9601"/>
    <lineage>
        <taxon>Eukaryota</taxon>
        <taxon>Metazoa</taxon>
        <taxon>Chordata</taxon>
        <taxon>Craniata</taxon>
        <taxon>Vertebrata</taxon>
        <taxon>Euteleostomi</taxon>
        <taxon>Mammalia</taxon>
        <taxon>Eutheria</taxon>
        <taxon>Euarchontoglires</taxon>
        <taxon>Primates</taxon>
        <taxon>Haplorrhini</taxon>
        <taxon>Catarrhini</taxon>
        <taxon>Hominidae</taxon>
        <taxon>Pongo</taxon>
    </lineage>
</organism>
<keyword id="KW-1015">Disulfide bond</keyword>
<keyword id="KW-0325">Glycoprotein</keyword>
<keyword id="KW-0328">Glycosyltransferase</keyword>
<keyword id="KW-0333">Golgi apparatus</keyword>
<keyword id="KW-0443">Lipid metabolism</keyword>
<keyword id="KW-0464">Manganese</keyword>
<keyword id="KW-0472">Membrane</keyword>
<keyword id="KW-0479">Metal-binding</keyword>
<keyword id="KW-1185">Reference proteome</keyword>
<keyword id="KW-0735">Signal-anchor</keyword>
<keyword id="KW-0808">Transferase</keyword>
<keyword id="KW-0812">Transmembrane</keyword>
<keyword id="KW-1133">Transmembrane helix</keyword>
<sequence length="393" mass="43922">MLRRLLERPCTLALLVGSQLAVMMYLSLGGFRSLSALFGRDQGPTFDYSHPRDVYSNLSHLPGAPGGPPAPQGLPYCPERSPLLVGPVSVSFSPVPSLAEIVERNPRVEPGGRYRPAGCEPRSRTAIIVPHRAREHHLRLLLYHLHPFLQRQQLAYGIYVIHQAGNGTFNRAKLLNVGVREALRDEEWDCLFLHDVDLLPENDHNLYVCDPRGPRHVAVAMNKFGYSLPYPQYFGGVSALTPDQYLKMNGFPNEYWGWGGEDDDIATRVRLAGMKISRPPTSVGHYKMVKHRGDKGNEENPHRFDLLVRTQNSWTQDGMNSLTYQLLARELGPLYTNITADIGTDPRGPRAPSGPRYPPGSSQAFRQEMLQRRPPARPGPPPTANHTALRGSH</sequence>
<comment type="function">
    <text evidence="2">Responsible for the synthesis of complex-type N-linked oligosaccharides in many glycoproteins as well as the carbohydrate moieties of glycolipids.</text>
</comment>
<comment type="catalytic activity">
    <reaction evidence="2">
        <text>an N-acetyl-beta-D-glucosaminyl derivative + UDP-alpha-D-galactose = a beta-D-galactosyl-(1-&gt;4)-N-acetyl-beta-D-glucosaminyl derivative + UDP + H(+)</text>
        <dbReference type="Rhea" id="RHEA:22932"/>
        <dbReference type="ChEBI" id="CHEBI:15378"/>
        <dbReference type="ChEBI" id="CHEBI:58223"/>
        <dbReference type="ChEBI" id="CHEBI:61631"/>
        <dbReference type="ChEBI" id="CHEBI:66914"/>
        <dbReference type="ChEBI" id="CHEBI:133507"/>
        <dbReference type="EC" id="2.4.1.38"/>
    </reaction>
    <physiologicalReaction direction="left-to-right" evidence="2">
        <dbReference type="Rhea" id="RHEA:22933"/>
    </physiologicalReaction>
</comment>
<comment type="catalytic activity">
    <reaction evidence="2">
        <text>N-acetyl-D-glucosamine + UDP-alpha-D-galactose = beta-D-galactosyl-(1-&gt;4)-N-acetyl-D-glucosamine + UDP + H(+)</text>
        <dbReference type="Rhea" id="RHEA:17745"/>
        <dbReference type="ChEBI" id="CHEBI:15378"/>
        <dbReference type="ChEBI" id="CHEBI:58223"/>
        <dbReference type="ChEBI" id="CHEBI:60152"/>
        <dbReference type="ChEBI" id="CHEBI:66914"/>
        <dbReference type="ChEBI" id="CHEBI:506227"/>
        <dbReference type="EC" id="2.4.1.90"/>
    </reaction>
    <physiologicalReaction direction="left-to-right" evidence="2">
        <dbReference type="Rhea" id="RHEA:17746"/>
    </physiologicalReaction>
</comment>
<comment type="catalytic activity">
    <reaction evidence="2">
        <text>a beta-D-GlcNAc-(1-&gt;3)-beta-D-Gal-(1-&gt;4)-beta-D-Glc-(1&lt;-&gt;1)-Cer(d18:1(4E)) + UDP-alpha-D-galactose = a neolactoside nLc4Cer(d18:1(4E)) + UDP + H(+)</text>
        <dbReference type="Rhea" id="RHEA:31499"/>
        <dbReference type="ChEBI" id="CHEBI:15378"/>
        <dbReference type="ChEBI" id="CHEBI:17006"/>
        <dbReference type="ChEBI" id="CHEBI:17103"/>
        <dbReference type="ChEBI" id="CHEBI:58223"/>
        <dbReference type="ChEBI" id="CHEBI:66914"/>
        <dbReference type="EC" id="2.4.1.275"/>
    </reaction>
    <physiologicalReaction direction="left-to-right" evidence="2">
        <dbReference type="Rhea" id="RHEA:31500"/>
    </physiologicalReaction>
</comment>
<comment type="catalytic activity">
    <reaction evidence="2">
        <text>a beta-D-glucosylceramide + UDP-alpha-D-galactose = a beta-D-galactosyl-(1-&gt;4)-beta-D-glucosyl-(1&lt;-&gt;1)-ceramide + UDP + H(+)</text>
        <dbReference type="Rhea" id="RHEA:62552"/>
        <dbReference type="ChEBI" id="CHEBI:15378"/>
        <dbReference type="ChEBI" id="CHEBI:58223"/>
        <dbReference type="ChEBI" id="CHEBI:66914"/>
        <dbReference type="ChEBI" id="CHEBI:79208"/>
        <dbReference type="ChEBI" id="CHEBI:83264"/>
    </reaction>
    <physiologicalReaction direction="left-to-right" evidence="2">
        <dbReference type="Rhea" id="RHEA:62553"/>
    </physiologicalReaction>
</comment>
<comment type="catalytic activity">
    <reaction evidence="2">
        <text>a neolactoside IV(3)-beta-GlcNAc-nLc4Cer + UDP-alpha-D-galactose = a neolactoside nLc6Cer + UDP + H(+)</text>
        <dbReference type="Rhea" id="RHEA:62548"/>
        <dbReference type="ChEBI" id="CHEBI:15378"/>
        <dbReference type="ChEBI" id="CHEBI:58223"/>
        <dbReference type="ChEBI" id="CHEBI:66914"/>
        <dbReference type="ChEBI" id="CHEBI:90357"/>
        <dbReference type="ChEBI" id="CHEBI:144378"/>
    </reaction>
    <physiologicalReaction direction="left-to-right" evidence="2">
        <dbReference type="Rhea" id="RHEA:62549"/>
    </physiologicalReaction>
</comment>
<comment type="cofactor">
    <cofactor evidence="1">
        <name>Mn(2+)</name>
        <dbReference type="ChEBI" id="CHEBI:29035"/>
    </cofactor>
</comment>
<comment type="pathway">
    <text evidence="2">Protein modification; protein glycosylation.</text>
</comment>
<comment type="subcellular location">
    <subcellularLocation>
        <location evidence="1">Golgi apparatus</location>
        <location evidence="1">Golgi stack membrane</location>
        <topology evidence="1">Single-pass type II membrane protein</topology>
    </subcellularLocation>
    <text evidence="1">Trans cisternae of Golgi stack.</text>
</comment>
<comment type="similarity">
    <text evidence="5">Belongs to the glycosyltransferase 7 family.</text>
</comment>
<protein>
    <recommendedName>
        <fullName>Beta-1,4-galactosyltransferase 3</fullName>
        <shortName>Beta-1,4-GalTase 3</shortName>
        <shortName>Beta4Gal-T3</shortName>
        <shortName>b4Gal-T3</shortName>
        <ecNumber evidence="2">2.4.1.-</ecNumber>
    </recommendedName>
    <alternativeName>
        <fullName>Beta-N-acetylglucosaminyl-glycolipid beta-1,4-galactosyltransferase</fullName>
    </alternativeName>
    <alternativeName>
        <fullName>Beta-N-acetylglucosaminylglycopeptide beta-1,4-galactosyltransferase</fullName>
        <ecNumber evidence="2">2.4.1.38</ecNumber>
    </alternativeName>
    <alternativeName>
        <fullName>N-acetyllactosamine synthase</fullName>
        <ecNumber evidence="2">2.4.1.90</ecNumber>
    </alternativeName>
    <alternativeName>
        <fullName>Nal synthase</fullName>
    </alternativeName>
    <alternativeName>
        <fullName>Neolactotriaosylceramide beta-1,4-galactosyltransferase</fullName>
        <ecNumber>2.4.1.275</ecNumber>
    </alternativeName>
    <alternativeName>
        <fullName>UDP-Gal:beta-GlcNAc beta-1,4-galactosyltransferase 3</fullName>
    </alternativeName>
    <alternativeName>
        <fullName>UDP-galactose:beta-N-acetylglucosamine beta-1,4-galactosyltransferase 3</fullName>
    </alternativeName>
</protein>
<name>B4GT3_PONAB</name>
<dbReference type="EC" id="2.4.1.-" evidence="2"/>
<dbReference type="EC" id="2.4.1.38" evidence="2"/>
<dbReference type="EC" id="2.4.1.90" evidence="2"/>
<dbReference type="EC" id="2.4.1.275"/>
<dbReference type="EMBL" id="CR925982">
    <property type="protein sequence ID" value="CAI29630.1"/>
    <property type="molecule type" value="mRNA"/>
</dbReference>
<dbReference type="RefSeq" id="NP_001127681.1">
    <property type="nucleotide sequence ID" value="NM_001134209.1"/>
</dbReference>
<dbReference type="SMR" id="Q5NVN3"/>
<dbReference type="FunCoup" id="Q5NVN3">
    <property type="interactions" value="1989"/>
</dbReference>
<dbReference type="STRING" id="9601.ENSPPYP00000000709"/>
<dbReference type="CAZy" id="GT7">
    <property type="family name" value="Glycosyltransferase Family 7"/>
</dbReference>
<dbReference type="GlyCosmos" id="Q5NVN3">
    <property type="glycosylation" value="4 sites, No reported glycans"/>
</dbReference>
<dbReference type="Ensembl" id="ENSPPYT00000000736.2">
    <property type="protein sequence ID" value="ENSPPYP00000000709.2"/>
    <property type="gene ID" value="ENSPPYG00000000607.2"/>
</dbReference>
<dbReference type="GeneID" id="100174763"/>
<dbReference type="KEGG" id="pon:100174763"/>
<dbReference type="CTD" id="8703"/>
<dbReference type="eggNOG" id="KOG3916">
    <property type="taxonomic scope" value="Eukaryota"/>
</dbReference>
<dbReference type="GeneTree" id="ENSGT00940000158549"/>
<dbReference type="InParanoid" id="Q5NVN3"/>
<dbReference type="OMA" id="CDPGGPR"/>
<dbReference type="OrthoDB" id="419752at2759"/>
<dbReference type="UniPathway" id="UPA00378"/>
<dbReference type="Proteomes" id="UP000001595">
    <property type="component" value="Chromosome 1"/>
</dbReference>
<dbReference type="GO" id="GO:0005829">
    <property type="term" value="C:cytosol"/>
    <property type="evidence" value="ECO:0007669"/>
    <property type="project" value="Ensembl"/>
</dbReference>
<dbReference type="GO" id="GO:0032580">
    <property type="term" value="C:Golgi cisterna membrane"/>
    <property type="evidence" value="ECO:0007669"/>
    <property type="project" value="UniProtKB-SubCell"/>
</dbReference>
<dbReference type="GO" id="GO:0000139">
    <property type="term" value="C:Golgi membrane"/>
    <property type="evidence" value="ECO:0007669"/>
    <property type="project" value="UniProtKB-ARBA"/>
</dbReference>
<dbReference type="GO" id="GO:0003831">
    <property type="term" value="F:beta-N-acetylglucosaminylglycopeptide beta-1,4-galactosyltransferase activity"/>
    <property type="evidence" value="ECO:0007669"/>
    <property type="project" value="UniProtKB-EC"/>
</dbReference>
<dbReference type="GO" id="GO:0046872">
    <property type="term" value="F:metal ion binding"/>
    <property type="evidence" value="ECO:0007669"/>
    <property type="project" value="UniProtKB-KW"/>
</dbReference>
<dbReference type="GO" id="GO:0003945">
    <property type="term" value="F:N-acetyllactosamine synthase activity"/>
    <property type="evidence" value="ECO:0007669"/>
    <property type="project" value="UniProtKB-EC"/>
</dbReference>
<dbReference type="GO" id="GO:0005975">
    <property type="term" value="P:carbohydrate metabolic process"/>
    <property type="evidence" value="ECO:0007669"/>
    <property type="project" value="InterPro"/>
</dbReference>
<dbReference type="GO" id="GO:0006682">
    <property type="term" value="P:galactosylceramide biosynthetic process"/>
    <property type="evidence" value="ECO:0007669"/>
    <property type="project" value="Ensembl"/>
</dbReference>
<dbReference type="GO" id="GO:0006486">
    <property type="term" value="P:protein glycosylation"/>
    <property type="evidence" value="ECO:0007669"/>
    <property type="project" value="UniProtKB-UniPathway"/>
</dbReference>
<dbReference type="CDD" id="cd00899">
    <property type="entry name" value="b4GalT"/>
    <property type="match status" value="1"/>
</dbReference>
<dbReference type="FunFam" id="3.90.550.10:FF:000028">
    <property type="entry name" value="beta-1,4-galactosyltransferase 1"/>
    <property type="match status" value="1"/>
</dbReference>
<dbReference type="Gene3D" id="3.90.550.10">
    <property type="entry name" value="Spore Coat Polysaccharide Biosynthesis Protein SpsA, Chain A"/>
    <property type="match status" value="1"/>
</dbReference>
<dbReference type="InterPro" id="IPR003859">
    <property type="entry name" value="Galactosyl_T"/>
</dbReference>
<dbReference type="InterPro" id="IPR027791">
    <property type="entry name" value="Galactosyl_T_C"/>
</dbReference>
<dbReference type="InterPro" id="IPR027995">
    <property type="entry name" value="Galactosyl_T_N"/>
</dbReference>
<dbReference type="InterPro" id="IPR029044">
    <property type="entry name" value="Nucleotide-diphossugar_trans"/>
</dbReference>
<dbReference type="PANTHER" id="PTHR19300">
    <property type="entry name" value="BETA-1,4-GALACTOSYLTRANSFERASE"/>
    <property type="match status" value="1"/>
</dbReference>
<dbReference type="PANTHER" id="PTHR19300:SF33">
    <property type="entry name" value="BETA-1,4-GALACTOSYLTRANSFERASE 3"/>
    <property type="match status" value="1"/>
</dbReference>
<dbReference type="Pfam" id="PF02709">
    <property type="entry name" value="Glyco_transf_7C"/>
    <property type="match status" value="1"/>
</dbReference>
<dbReference type="Pfam" id="PF13733">
    <property type="entry name" value="Glyco_transf_7N"/>
    <property type="match status" value="1"/>
</dbReference>
<dbReference type="PRINTS" id="PR02050">
    <property type="entry name" value="B14GALTRFASE"/>
</dbReference>
<dbReference type="SUPFAM" id="SSF53448">
    <property type="entry name" value="Nucleotide-diphospho-sugar transferases"/>
    <property type="match status" value="1"/>
</dbReference>
<proteinExistence type="evidence at transcript level"/>
<feature type="chain" id="PRO_0000080539" description="Beta-1,4-galactosyltransferase 3">
    <location>
        <begin position="1"/>
        <end position="393"/>
    </location>
</feature>
<feature type="topological domain" description="Cytoplasmic" evidence="3">
    <location>
        <begin position="1"/>
        <end position="10"/>
    </location>
</feature>
<feature type="transmembrane region" description="Helical; Signal-anchor for type II membrane protein" evidence="3">
    <location>
        <begin position="11"/>
        <end position="31"/>
    </location>
</feature>
<feature type="topological domain" description="Lumenal" evidence="3">
    <location>
        <begin position="32"/>
        <end position="393"/>
    </location>
</feature>
<feature type="region of interest" description="Disordered" evidence="4">
    <location>
        <begin position="339"/>
        <end position="393"/>
    </location>
</feature>
<feature type="binding site" evidence="1">
    <location>
        <begin position="130"/>
        <end position="134"/>
    </location>
    <ligand>
        <name>UDP-alpha-D-galactose</name>
        <dbReference type="ChEBI" id="CHEBI:66914"/>
    </ligand>
</feature>
<feature type="binding site" evidence="1">
    <location>
        <begin position="169"/>
        <end position="171"/>
    </location>
    <ligand>
        <name>UDP-alpha-D-galactose</name>
        <dbReference type="ChEBI" id="CHEBI:66914"/>
    </ligand>
</feature>
<feature type="binding site" evidence="1">
    <location>
        <begin position="196"/>
        <end position="197"/>
    </location>
    <ligand>
        <name>UDP-alpha-D-galactose</name>
        <dbReference type="ChEBI" id="CHEBI:66914"/>
    </ligand>
</feature>
<feature type="binding site" evidence="1">
    <location>
        <position position="197"/>
    </location>
    <ligand>
        <name>Mn(2+)</name>
        <dbReference type="ChEBI" id="CHEBI:29035"/>
    </ligand>
</feature>
<feature type="binding site" evidence="1">
    <location>
        <position position="226"/>
    </location>
    <ligand>
        <name>UDP-alpha-D-galactose</name>
        <dbReference type="ChEBI" id="CHEBI:66914"/>
    </ligand>
</feature>
<feature type="binding site" evidence="1">
    <location>
        <position position="258"/>
    </location>
    <ligand>
        <name>UDP-alpha-D-galactose</name>
        <dbReference type="ChEBI" id="CHEBI:66914"/>
    </ligand>
</feature>
<feature type="binding site" evidence="1">
    <location>
        <begin position="260"/>
        <end position="263"/>
    </location>
    <ligand>
        <name>N-acetyl-D-glucosamine</name>
        <dbReference type="ChEBI" id="CHEBI:506227"/>
    </ligand>
</feature>
<feature type="binding site" evidence="1">
    <location>
        <begin position="291"/>
        <end position="293"/>
    </location>
    <ligand>
        <name>UDP-alpha-D-galactose</name>
        <dbReference type="ChEBI" id="CHEBI:66914"/>
    </ligand>
</feature>
<feature type="binding site" evidence="1">
    <location>
        <position position="291"/>
    </location>
    <ligand>
        <name>Mn(2+)</name>
        <dbReference type="ChEBI" id="CHEBI:29035"/>
    </ligand>
</feature>
<feature type="binding site" evidence="1">
    <location>
        <position position="303"/>
    </location>
    <ligand>
        <name>N-acetyl-D-glucosamine</name>
        <dbReference type="ChEBI" id="CHEBI:506227"/>
    </ligand>
</feature>
<feature type="glycosylation site" description="N-linked (GlcNAc...) asparagine" evidence="3">
    <location>
        <position position="57"/>
    </location>
</feature>
<feature type="glycosylation site" description="N-linked (GlcNAc...) asparagine" evidence="3">
    <location>
        <position position="166"/>
    </location>
</feature>
<feature type="glycosylation site" description="N-linked (GlcNAc...) asparagine" evidence="3">
    <location>
        <position position="337"/>
    </location>
</feature>
<feature type="glycosylation site" description="N-linked (GlcNAc...) asparagine" evidence="3">
    <location>
        <position position="385"/>
    </location>
</feature>
<feature type="disulfide bond" evidence="1">
    <location>
        <begin position="77"/>
        <end position="119"/>
    </location>
</feature>
<feature type="disulfide bond" evidence="1">
    <location>
        <begin position="190"/>
        <end position="209"/>
    </location>
</feature>
<evidence type="ECO:0000250" key="1"/>
<evidence type="ECO:0000250" key="2">
    <source>
        <dbReference type="UniProtKB" id="O60512"/>
    </source>
</evidence>
<evidence type="ECO:0000255" key="3"/>
<evidence type="ECO:0000256" key="4">
    <source>
        <dbReference type="SAM" id="MobiDB-lite"/>
    </source>
</evidence>
<evidence type="ECO:0000305" key="5"/>
<reference key="1">
    <citation type="submission" date="2004-11" db="EMBL/GenBank/DDBJ databases">
        <authorList>
            <consortium name="The German cDNA consortium"/>
        </authorList>
    </citation>
    <scope>NUCLEOTIDE SEQUENCE [LARGE SCALE MRNA]</scope>
    <source>
        <tissue>Brain cortex</tissue>
    </source>
</reference>
<accession>Q5NVN3</accession>
<gene>
    <name type="primary">B4GALT3</name>
</gene>